<organism>
    <name type="scientific">Aspergillus fumigatus</name>
    <name type="common">Neosartorya fumigata</name>
    <dbReference type="NCBI Taxonomy" id="746128"/>
    <lineage>
        <taxon>Eukaryota</taxon>
        <taxon>Fungi</taxon>
        <taxon>Dikarya</taxon>
        <taxon>Ascomycota</taxon>
        <taxon>Pezizomycotina</taxon>
        <taxon>Eurotiomycetes</taxon>
        <taxon>Eurotiomycetidae</taxon>
        <taxon>Eurotiales</taxon>
        <taxon>Aspergillaceae</taxon>
        <taxon>Aspergillus</taxon>
        <taxon>Aspergillus subgen. Fumigati</taxon>
    </lineage>
</organism>
<proteinExistence type="evidence at protein level"/>
<accession>B9WZX2</accession>
<sequence length="342" mass="38479">MTQAVDIGTIQTLIRLEVPDQVPLTGSIPYDALVKKLKTPVDPELLQRLIRFTRLVGFLDEDAEGAVKHSPMSAIFVNDPDTAGQARFMADFGIRPCSFIYESIKLDPSGEAARQGPLALMAREPGAREGPTFFEVLEKDPVNRKRWHDGMAVHNDSMVRHVAGAYDWGTVQSLVDIGGSEGHVAAVIVNAFPHIQITVQDRPEIIEKARQRGDRHPNIIFEEHDFFTPQPRIADAYFLRLILHDWNDADCTRIVRQISSALRPGARLLIMDAVLPEPGEGSLQSERRLRRSDIGMYTLFSAKERSLAQMRRLVEDCDSRLRFEKLYTPPGSHASMLSWICE</sequence>
<comment type="function">
    <text evidence="3 4 5 6 7 8 9 10 12 13">6-hydroxytryprostatin B O-methyltransferase; part of the gene cluster that mediates the biosynthesis of fumitremorgins, indole alkaloids that carry not only intriguing chemical structures, but also interesting biological and pharmacological activities (PubMed:23649274). The biosynthesis of fumitremorgin-type alkaloids begins by condensation of the two amino acids L-tryptophan and L-proline to brevianamide F, catalyzed by the non-ribosomal peptide synthetase ftmA (PubMed:16755625). Brevianamide F is then prenylated by the prenyltransferase ftmPT1/ftmB in the presence of dimethylallyl diphosphate, resulting in the formation of tryprostatin B (PubMed:16000710, PubMed:21105662, PubMed:23090579). The three cytochrome P450 monooxygenases, ftmP450-1/ftmC, ftmP450-2/ftmE and ftmP450-3/FtmG, are responsible for the conversion of tryprostatin B to 6-hydroxytryprostatin B, tryprostatin A to fumitremorgin C and fumitremorgin C to 12,13-dihydroxyfumitremorgin C, respectively (PubMed:19226505). The putative methyltransferase ftmMT/ftmD is expected for the conversion of 6-hydroxytryprostatin B to tryprostatin A (Probable). FtmPT2/FtmH catalyzes the prenylation of 12,13-dihydroxyfumitre-morgin C in the presence of dimethylallyl diphosphate, resulting in the formation of fumitremorgin B (PubMed:18683158). Fumitremorgin B is further converted to verruculogen by ftmOx1/ftmF via the insertion of an endoperoxide bond between the two prenyl moieties (PubMed:19763315). In some fungal species, verruculogen is further converted to fumitremorgin A, but the enzymes involved in this step have not been identified yet (Probable).</text>
</comment>
<comment type="catalytic activity">
    <reaction evidence="10">
        <text>6-hydroxytryprostatin B + S-adenosyl-L-methionine = tryprostatin A + S-adenosyl-L-homocysteine + H(+)</text>
        <dbReference type="Rhea" id="RHEA:37903"/>
        <dbReference type="ChEBI" id="CHEBI:15378"/>
        <dbReference type="ChEBI" id="CHEBI:57856"/>
        <dbReference type="ChEBI" id="CHEBI:59789"/>
        <dbReference type="ChEBI" id="CHEBI:72761"/>
        <dbReference type="ChEBI" id="CHEBI:72762"/>
        <dbReference type="EC" id="2.1.1.293"/>
    </reaction>
</comment>
<comment type="biophysicochemical properties">
    <kinetics>
        <KM evidence="10">11 uM for S-adenosyl-L-methionine</KM>
        <KM evidence="10">21 uM for 6-hydroxytryprostatin B</KM>
        <text>kcat is 27 sec(-1) with 6-hydroxytryprostatin B as substrate. kcat is 28 sec(-1) with S-adenosyl-L-methionine as substrate.</text>
    </kinetics>
</comment>
<comment type="pathway">
    <text evidence="10">Alkaloid biosynthesis.</text>
</comment>
<comment type="subunit">
    <text evidence="1">Homodimer.</text>
</comment>
<comment type="similarity">
    <text evidence="2">Belongs to the class I-like SAM-binding methyltransferase superfamily. Cation-independent O-methyltransferase family.</text>
</comment>
<feature type="chain" id="PRO_0000424129" description="6-hydroxytryprostatin B O-methyltransferase">
    <location>
        <begin position="1"/>
        <end position="342"/>
    </location>
</feature>
<feature type="active site" description="Proton acceptor" evidence="2">
    <location>
        <position position="244"/>
    </location>
</feature>
<feature type="binding site" evidence="2">
    <location>
        <position position="201"/>
    </location>
    <ligand>
        <name>S-adenosyl-L-methionine</name>
        <dbReference type="ChEBI" id="CHEBI:59789"/>
    </ligand>
</feature>
<feature type="site" description="Required for binding 6-hydroxytryprostatin B">
    <location>
        <position position="202"/>
    </location>
</feature>
<reference key="1">
    <citation type="journal article" date="2009" name="ChemBioChem">
        <title>Identification of cytochrome P450s required for fumitremorgin biosynthesis in Aspergillus fumigatus.</title>
        <authorList>
            <person name="Kato N."/>
            <person name="Suzuki H."/>
            <person name="Takagi H."/>
            <person name="Asami Y."/>
            <person name="Kakeya H."/>
            <person name="Uramoto M."/>
            <person name="Usui T."/>
            <person name="Takahashi S."/>
            <person name="Sugimoto Y."/>
            <person name="Osada H."/>
        </authorList>
    </citation>
    <scope>NUCLEOTIDE SEQUENCE [GENOMIC DNA]</scope>
    <scope>FUNCTION</scope>
    <source>
        <strain>BM939</strain>
    </source>
</reference>
<reference key="2">
    <citation type="journal article" date="2005" name="Microbiology">
        <title>Overproduction, purification and characterization of FtmPT1, a brevianamide F prenyltransferase from Aspergillus fumigatus.</title>
        <authorList>
            <person name="Grundmann A."/>
            <person name="Li S.M."/>
        </authorList>
    </citation>
    <scope>FUNCTION</scope>
</reference>
<reference key="3">
    <citation type="journal article" date="2006" name="ChemBioChem">
        <title>The fumitremorgin gene cluster of Aspergillus fumigatus: identification of a gene encoding brevianamide F synthetase.</title>
        <authorList>
            <person name="Maiya S."/>
            <person name="Grundmann A."/>
            <person name="Li S.M."/>
            <person name="Turner G."/>
        </authorList>
    </citation>
    <scope>FUNCTION</scope>
</reference>
<reference key="4">
    <citation type="journal article" date="2008" name="ChemBioChem">
        <title>FtmPT2, an N-prenyltransferase from Aspergillus fumigatus, catalyses the last step in the biosynthesis of fumitremorgin B.</title>
        <authorList>
            <person name="Grundmann A."/>
            <person name="Kuznetsova T."/>
            <person name="Afiyatullov S.S."/>
            <person name="Li S.M."/>
        </authorList>
    </citation>
    <scope>FUNCTION</scope>
</reference>
<reference key="5">
    <citation type="journal article" date="2009" name="Org. Biomol. Chem.">
        <title>FtmOx1, a non-heme Fe(II) and alpha-ketoglutarate-dependent dioxygenase, catalyses the endoperoxide formation of verruculogen in Aspergillus fumigatus.</title>
        <authorList>
            <person name="Steffan N."/>
            <person name="Grundmann A."/>
            <person name="Afiyatullov S."/>
            <person name="Ruan H."/>
            <person name="Li S.M."/>
        </authorList>
    </citation>
    <scope>FUNCTION</scope>
</reference>
<reference key="6">
    <citation type="journal article" date="2010" name="J. Am. Chem. Soc.">
        <title>Structure-function analysis of an enzymatic prenyl transfer reaction identifies a reaction chamber with modifiable specificity.</title>
        <authorList>
            <person name="Jost M."/>
            <person name="Zocher G."/>
            <person name="Tarcz S."/>
            <person name="Matuschek M."/>
            <person name="Xie X."/>
            <person name="Li S.M."/>
            <person name="Stehle T."/>
        </authorList>
    </citation>
    <scope>FUNCTION</scope>
</reference>
<reference key="7">
    <citation type="journal article" date="2012" name="Org. Biomol. Chem.">
        <title>Breaking the regioselectivity of indole prenyltransferases: identification of regular C3-prenylated hexahydropyrrolo[2,3-b]indoles as side products of the regular C2-prenyltransferase FtmPT1.</title>
        <authorList>
            <person name="Wollinsky B."/>
            <person name="Ludwig L."/>
            <person name="Xie X."/>
            <person name="Li S.M."/>
        </authorList>
    </citation>
    <scope>FUNCTION</scope>
</reference>
<reference key="8">
    <citation type="journal article" date="2013" name="Biosci. Biotechnol. Biochem.">
        <title>A point mutation in ftmD blocks the fumitremorgin biosynthetic pathway in Aspergillus fumigatus strain Af293.</title>
        <authorList>
            <person name="Kato N."/>
            <person name="Suzuki H."/>
            <person name="Okumura H."/>
            <person name="Takahashi S."/>
            <person name="Osada H."/>
        </authorList>
    </citation>
    <scope>FUNCTION</scope>
    <scope>CATALYTIC ACTIVITY</scope>
    <scope>BIOPHYSICOCHEMICAL PROPERTIES</scope>
    <scope>SUBUNIT</scope>
    <scope>PATHWAY</scope>
</reference>
<keyword id="KW-0017">Alkaloid metabolism</keyword>
<keyword id="KW-0489">Methyltransferase</keyword>
<keyword id="KW-0949">S-adenosyl-L-methionine</keyword>
<keyword id="KW-0808">Transferase</keyword>
<keyword id="KW-0843">Virulence</keyword>
<dbReference type="EC" id="2.1.1.293" evidence="10"/>
<dbReference type="EMBL" id="AB436628">
    <property type="protein sequence ID" value="BAH23997.1"/>
    <property type="molecule type" value="Genomic_DNA"/>
</dbReference>
<dbReference type="SMR" id="B9WZX2"/>
<dbReference type="BioCyc" id="MetaCyc:MONOMER-18767"/>
<dbReference type="BRENDA" id="2.1.1.293">
    <property type="organism ID" value="508"/>
</dbReference>
<dbReference type="GO" id="GO:0008171">
    <property type="term" value="F:O-methyltransferase activity"/>
    <property type="evidence" value="ECO:0007669"/>
    <property type="project" value="InterPro"/>
</dbReference>
<dbReference type="GO" id="GO:0032259">
    <property type="term" value="P:methylation"/>
    <property type="evidence" value="ECO:0007669"/>
    <property type="project" value="UniProtKB-KW"/>
</dbReference>
<dbReference type="GO" id="GO:1902181">
    <property type="term" value="P:verruculogen biosynthetic process"/>
    <property type="evidence" value="ECO:0000314"/>
    <property type="project" value="GO_Central"/>
</dbReference>
<dbReference type="FunFam" id="3.40.50.150:FF:000646">
    <property type="entry name" value="6-hydroxytryprostatin B O-methyltransferase"/>
    <property type="match status" value="1"/>
</dbReference>
<dbReference type="Gene3D" id="3.40.50.150">
    <property type="entry name" value="Vaccinia Virus protein VP39"/>
    <property type="match status" value="1"/>
</dbReference>
<dbReference type="Gene3D" id="1.10.10.10">
    <property type="entry name" value="Winged helix-like DNA-binding domain superfamily/Winged helix DNA-binding domain"/>
    <property type="match status" value="1"/>
</dbReference>
<dbReference type="InterPro" id="IPR016461">
    <property type="entry name" value="COMT-like"/>
</dbReference>
<dbReference type="InterPro" id="IPR001077">
    <property type="entry name" value="O_MeTrfase_dom"/>
</dbReference>
<dbReference type="InterPro" id="IPR029063">
    <property type="entry name" value="SAM-dependent_MTases_sf"/>
</dbReference>
<dbReference type="InterPro" id="IPR036388">
    <property type="entry name" value="WH-like_DNA-bd_sf"/>
</dbReference>
<dbReference type="InterPro" id="IPR036390">
    <property type="entry name" value="WH_DNA-bd_sf"/>
</dbReference>
<dbReference type="PANTHER" id="PTHR43712:SF5">
    <property type="entry name" value="O-METHYLTRANSFERASE ASQN-RELATED"/>
    <property type="match status" value="1"/>
</dbReference>
<dbReference type="PANTHER" id="PTHR43712">
    <property type="entry name" value="PUTATIVE (AFU_ORTHOLOGUE AFUA_4G14580)-RELATED"/>
    <property type="match status" value="1"/>
</dbReference>
<dbReference type="Pfam" id="PF00891">
    <property type="entry name" value="Methyltransf_2"/>
    <property type="match status" value="1"/>
</dbReference>
<dbReference type="PIRSF" id="PIRSF005739">
    <property type="entry name" value="O-mtase"/>
    <property type="match status" value="1"/>
</dbReference>
<dbReference type="SUPFAM" id="SSF53335">
    <property type="entry name" value="S-adenosyl-L-methionine-dependent methyltransferases"/>
    <property type="match status" value="1"/>
</dbReference>
<dbReference type="SUPFAM" id="SSF46785">
    <property type="entry name" value="Winged helix' DNA-binding domain"/>
    <property type="match status" value="1"/>
</dbReference>
<dbReference type="PROSITE" id="PS51683">
    <property type="entry name" value="SAM_OMT_II"/>
    <property type="match status" value="1"/>
</dbReference>
<gene>
    <name evidence="11" type="primary">ftmMT</name>
    <name evidence="11" type="synonym">ftmD</name>
</gene>
<name>FTMD_ASPFM</name>
<evidence type="ECO:0000250" key="1">
    <source>
        <dbReference type="UniProtKB" id="Q4WAW6"/>
    </source>
</evidence>
<evidence type="ECO:0000255" key="2">
    <source>
        <dbReference type="PROSITE-ProRule" id="PRU01020"/>
    </source>
</evidence>
<evidence type="ECO:0000269" key="3">
    <source>
    </source>
</evidence>
<evidence type="ECO:0000269" key="4">
    <source>
    </source>
</evidence>
<evidence type="ECO:0000269" key="5">
    <source>
    </source>
</evidence>
<evidence type="ECO:0000269" key="6">
    <source>
    </source>
</evidence>
<evidence type="ECO:0000269" key="7">
    <source>
    </source>
</evidence>
<evidence type="ECO:0000269" key="8">
    <source>
    </source>
</evidence>
<evidence type="ECO:0000269" key="9">
    <source>
    </source>
</evidence>
<evidence type="ECO:0000269" key="10">
    <source>
    </source>
</evidence>
<evidence type="ECO:0000303" key="11">
    <source>
    </source>
</evidence>
<evidence type="ECO:0000305" key="12"/>
<evidence type="ECO:0000305" key="13">
    <source>
    </source>
</evidence>
<protein>
    <recommendedName>
        <fullName evidence="11">6-hydroxytryprostatin B O-methyltransferase</fullName>
        <ecNumber evidence="10">2.1.1.293</ecNumber>
    </recommendedName>
    <alternativeName>
        <fullName evidence="11">Fumitremorgin biosynthesis protein D</fullName>
    </alternativeName>
</protein>